<gene>
    <name evidence="1" type="primary">rplU</name>
    <name type="ordered locus">Geob_1244</name>
</gene>
<evidence type="ECO:0000255" key="1">
    <source>
        <dbReference type="HAMAP-Rule" id="MF_01363"/>
    </source>
</evidence>
<evidence type="ECO:0000305" key="2"/>
<name>RL21_GEODF</name>
<reference key="1">
    <citation type="submission" date="2009-01" db="EMBL/GenBank/DDBJ databases">
        <title>Complete sequence of Geobacter sp. FRC-32.</title>
        <authorList>
            <consortium name="US DOE Joint Genome Institute"/>
            <person name="Lucas S."/>
            <person name="Copeland A."/>
            <person name="Lapidus A."/>
            <person name="Glavina del Rio T."/>
            <person name="Dalin E."/>
            <person name="Tice H."/>
            <person name="Bruce D."/>
            <person name="Goodwin L."/>
            <person name="Pitluck S."/>
            <person name="Saunders E."/>
            <person name="Brettin T."/>
            <person name="Detter J.C."/>
            <person name="Han C."/>
            <person name="Larimer F."/>
            <person name="Land M."/>
            <person name="Hauser L."/>
            <person name="Kyrpides N."/>
            <person name="Ovchinnikova G."/>
            <person name="Kostka J."/>
            <person name="Richardson P."/>
        </authorList>
    </citation>
    <scope>NUCLEOTIDE SEQUENCE [LARGE SCALE GENOMIC DNA]</scope>
    <source>
        <strain>DSM 22248 / JCM 15807 / FRC-32</strain>
    </source>
</reference>
<dbReference type="EMBL" id="CP001390">
    <property type="protein sequence ID" value="ACM19604.1"/>
    <property type="molecule type" value="Genomic_DNA"/>
</dbReference>
<dbReference type="RefSeq" id="WP_012646333.1">
    <property type="nucleotide sequence ID" value="NC_011979.1"/>
</dbReference>
<dbReference type="SMR" id="B9M3W1"/>
<dbReference type="STRING" id="316067.Geob_1244"/>
<dbReference type="KEGG" id="geo:Geob_1244"/>
<dbReference type="eggNOG" id="COG0261">
    <property type="taxonomic scope" value="Bacteria"/>
</dbReference>
<dbReference type="HOGENOM" id="CLU_061463_3_2_7"/>
<dbReference type="OrthoDB" id="9813334at2"/>
<dbReference type="Proteomes" id="UP000007721">
    <property type="component" value="Chromosome"/>
</dbReference>
<dbReference type="GO" id="GO:0005737">
    <property type="term" value="C:cytoplasm"/>
    <property type="evidence" value="ECO:0007669"/>
    <property type="project" value="UniProtKB-ARBA"/>
</dbReference>
<dbReference type="GO" id="GO:1990904">
    <property type="term" value="C:ribonucleoprotein complex"/>
    <property type="evidence" value="ECO:0007669"/>
    <property type="project" value="UniProtKB-KW"/>
</dbReference>
<dbReference type="GO" id="GO:0005840">
    <property type="term" value="C:ribosome"/>
    <property type="evidence" value="ECO:0007669"/>
    <property type="project" value="UniProtKB-KW"/>
</dbReference>
<dbReference type="GO" id="GO:0019843">
    <property type="term" value="F:rRNA binding"/>
    <property type="evidence" value="ECO:0007669"/>
    <property type="project" value="UniProtKB-UniRule"/>
</dbReference>
<dbReference type="GO" id="GO:0003735">
    <property type="term" value="F:structural constituent of ribosome"/>
    <property type="evidence" value="ECO:0007669"/>
    <property type="project" value="InterPro"/>
</dbReference>
<dbReference type="GO" id="GO:0006412">
    <property type="term" value="P:translation"/>
    <property type="evidence" value="ECO:0007669"/>
    <property type="project" value="UniProtKB-UniRule"/>
</dbReference>
<dbReference type="HAMAP" id="MF_01363">
    <property type="entry name" value="Ribosomal_bL21"/>
    <property type="match status" value="1"/>
</dbReference>
<dbReference type="InterPro" id="IPR028909">
    <property type="entry name" value="bL21-like"/>
</dbReference>
<dbReference type="InterPro" id="IPR036164">
    <property type="entry name" value="bL21-like_sf"/>
</dbReference>
<dbReference type="InterPro" id="IPR001787">
    <property type="entry name" value="Ribosomal_bL21"/>
</dbReference>
<dbReference type="InterPro" id="IPR018258">
    <property type="entry name" value="Ribosomal_bL21_CS"/>
</dbReference>
<dbReference type="NCBIfam" id="TIGR00061">
    <property type="entry name" value="L21"/>
    <property type="match status" value="1"/>
</dbReference>
<dbReference type="PANTHER" id="PTHR21349">
    <property type="entry name" value="50S RIBOSOMAL PROTEIN L21"/>
    <property type="match status" value="1"/>
</dbReference>
<dbReference type="PANTHER" id="PTHR21349:SF0">
    <property type="entry name" value="LARGE RIBOSOMAL SUBUNIT PROTEIN BL21M"/>
    <property type="match status" value="1"/>
</dbReference>
<dbReference type="Pfam" id="PF00829">
    <property type="entry name" value="Ribosomal_L21p"/>
    <property type="match status" value="1"/>
</dbReference>
<dbReference type="SUPFAM" id="SSF141091">
    <property type="entry name" value="L21p-like"/>
    <property type="match status" value="1"/>
</dbReference>
<dbReference type="PROSITE" id="PS01169">
    <property type="entry name" value="RIBOSOMAL_L21"/>
    <property type="match status" value="1"/>
</dbReference>
<accession>B9M3W1</accession>
<sequence length="102" mass="11164">MYAVVRTGGKQYKVSEGDFLKVEKLEGAVGDTVNLSEVLMVGGDKVAIGTPLVPSASVVGKIVEQGKDKKILVFKSKRRKDSRKLNGHRQLRTILKIEKINA</sequence>
<organism>
    <name type="scientific">Geotalea daltonii (strain DSM 22248 / JCM 15807 / FRC-32)</name>
    <name type="common">Geobacter daltonii</name>
    <dbReference type="NCBI Taxonomy" id="316067"/>
    <lineage>
        <taxon>Bacteria</taxon>
        <taxon>Pseudomonadati</taxon>
        <taxon>Thermodesulfobacteriota</taxon>
        <taxon>Desulfuromonadia</taxon>
        <taxon>Geobacterales</taxon>
        <taxon>Geobacteraceae</taxon>
        <taxon>Geotalea</taxon>
    </lineage>
</organism>
<feature type="chain" id="PRO_1000166724" description="Large ribosomal subunit protein bL21">
    <location>
        <begin position="1"/>
        <end position="102"/>
    </location>
</feature>
<comment type="function">
    <text evidence="1">This protein binds to 23S rRNA in the presence of protein L20.</text>
</comment>
<comment type="subunit">
    <text evidence="1">Part of the 50S ribosomal subunit. Contacts protein L20.</text>
</comment>
<comment type="similarity">
    <text evidence="1">Belongs to the bacterial ribosomal protein bL21 family.</text>
</comment>
<keyword id="KW-1185">Reference proteome</keyword>
<keyword id="KW-0687">Ribonucleoprotein</keyword>
<keyword id="KW-0689">Ribosomal protein</keyword>
<keyword id="KW-0694">RNA-binding</keyword>
<keyword id="KW-0699">rRNA-binding</keyword>
<protein>
    <recommendedName>
        <fullName evidence="1">Large ribosomal subunit protein bL21</fullName>
    </recommendedName>
    <alternativeName>
        <fullName evidence="2">50S ribosomal protein L21</fullName>
    </alternativeName>
</protein>
<proteinExistence type="inferred from homology"/>